<organism>
    <name type="scientific">Shigella flexneri serotype 5b (strain 8401)</name>
    <dbReference type="NCBI Taxonomy" id="373384"/>
    <lineage>
        <taxon>Bacteria</taxon>
        <taxon>Pseudomonadati</taxon>
        <taxon>Pseudomonadota</taxon>
        <taxon>Gammaproteobacteria</taxon>
        <taxon>Enterobacterales</taxon>
        <taxon>Enterobacteriaceae</taxon>
        <taxon>Shigella</taxon>
    </lineage>
</organism>
<reference key="1">
    <citation type="journal article" date="2006" name="BMC Genomics">
        <title>Complete genome sequence of Shigella flexneri 5b and comparison with Shigella flexneri 2a.</title>
        <authorList>
            <person name="Nie H."/>
            <person name="Yang F."/>
            <person name="Zhang X."/>
            <person name="Yang J."/>
            <person name="Chen L."/>
            <person name="Wang J."/>
            <person name="Xiong Z."/>
            <person name="Peng J."/>
            <person name="Sun L."/>
            <person name="Dong J."/>
            <person name="Xue Y."/>
            <person name="Xu X."/>
            <person name="Chen S."/>
            <person name="Yao Z."/>
            <person name="Shen Y."/>
            <person name="Jin Q."/>
        </authorList>
    </citation>
    <scope>NUCLEOTIDE SEQUENCE [LARGE SCALE GENOMIC DNA]</scope>
    <source>
        <strain>8401</strain>
    </source>
</reference>
<name>RL17_SHIF8</name>
<sequence>MRHRKSGRQLNRNSSHRQAMFRNMAGSLVRHEIIKTTLPKAKELRRVVEPLITLAKTDSVANRRLAFARTRDNEIVAKLFNELGPRFASRAGGYTRILKCGFRAGDNAPMAYIELVDRSEKAEAAAE</sequence>
<proteinExistence type="inferred from homology"/>
<dbReference type="EMBL" id="CP000266">
    <property type="protein sequence ID" value="ABF05357.1"/>
    <property type="molecule type" value="Genomic_DNA"/>
</dbReference>
<dbReference type="RefSeq" id="WP_001216368.1">
    <property type="nucleotide sequence ID" value="NC_008258.1"/>
</dbReference>
<dbReference type="SMR" id="Q0T008"/>
<dbReference type="GeneID" id="97442834"/>
<dbReference type="KEGG" id="sfv:SFV_3314"/>
<dbReference type="HOGENOM" id="CLU_074407_2_0_6"/>
<dbReference type="Proteomes" id="UP000000659">
    <property type="component" value="Chromosome"/>
</dbReference>
<dbReference type="GO" id="GO:0022625">
    <property type="term" value="C:cytosolic large ribosomal subunit"/>
    <property type="evidence" value="ECO:0007669"/>
    <property type="project" value="TreeGrafter"/>
</dbReference>
<dbReference type="GO" id="GO:0003735">
    <property type="term" value="F:structural constituent of ribosome"/>
    <property type="evidence" value="ECO:0007669"/>
    <property type="project" value="InterPro"/>
</dbReference>
<dbReference type="GO" id="GO:0006412">
    <property type="term" value="P:translation"/>
    <property type="evidence" value="ECO:0007669"/>
    <property type="project" value="UniProtKB-UniRule"/>
</dbReference>
<dbReference type="FunFam" id="3.90.1030.10:FF:000001">
    <property type="entry name" value="50S ribosomal protein L17"/>
    <property type="match status" value="1"/>
</dbReference>
<dbReference type="Gene3D" id="3.90.1030.10">
    <property type="entry name" value="Ribosomal protein L17"/>
    <property type="match status" value="1"/>
</dbReference>
<dbReference type="HAMAP" id="MF_01368">
    <property type="entry name" value="Ribosomal_bL17"/>
    <property type="match status" value="1"/>
</dbReference>
<dbReference type="InterPro" id="IPR000456">
    <property type="entry name" value="Ribosomal_bL17"/>
</dbReference>
<dbReference type="InterPro" id="IPR047859">
    <property type="entry name" value="Ribosomal_bL17_CS"/>
</dbReference>
<dbReference type="InterPro" id="IPR036373">
    <property type="entry name" value="Ribosomal_bL17_sf"/>
</dbReference>
<dbReference type="NCBIfam" id="TIGR00059">
    <property type="entry name" value="L17"/>
    <property type="match status" value="1"/>
</dbReference>
<dbReference type="PANTHER" id="PTHR14413:SF16">
    <property type="entry name" value="LARGE RIBOSOMAL SUBUNIT PROTEIN BL17M"/>
    <property type="match status" value="1"/>
</dbReference>
<dbReference type="PANTHER" id="PTHR14413">
    <property type="entry name" value="RIBOSOMAL PROTEIN L17"/>
    <property type="match status" value="1"/>
</dbReference>
<dbReference type="Pfam" id="PF01196">
    <property type="entry name" value="Ribosomal_L17"/>
    <property type="match status" value="1"/>
</dbReference>
<dbReference type="SUPFAM" id="SSF64263">
    <property type="entry name" value="Prokaryotic ribosomal protein L17"/>
    <property type="match status" value="1"/>
</dbReference>
<dbReference type="PROSITE" id="PS01167">
    <property type="entry name" value="RIBOSOMAL_L17"/>
    <property type="match status" value="1"/>
</dbReference>
<gene>
    <name evidence="1" type="primary">rplQ</name>
    <name type="ordered locus">SFV_3314</name>
</gene>
<comment type="subunit">
    <text evidence="1">Part of the 50S ribosomal subunit. Contacts protein L32.</text>
</comment>
<comment type="similarity">
    <text evidence="1">Belongs to the bacterial ribosomal protein bL17 family.</text>
</comment>
<evidence type="ECO:0000255" key="1">
    <source>
        <dbReference type="HAMAP-Rule" id="MF_01368"/>
    </source>
</evidence>
<evidence type="ECO:0000305" key="2"/>
<keyword id="KW-0687">Ribonucleoprotein</keyword>
<keyword id="KW-0689">Ribosomal protein</keyword>
<feature type="chain" id="PRO_1000055945" description="Large ribosomal subunit protein bL17">
    <location>
        <begin position="1"/>
        <end position="127"/>
    </location>
</feature>
<protein>
    <recommendedName>
        <fullName evidence="1">Large ribosomal subunit protein bL17</fullName>
    </recommendedName>
    <alternativeName>
        <fullName evidence="2">50S ribosomal protein L17</fullName>
    </alternativeName>
</protein>
<accession>Q0T008</accession>